<proteinExistence type="inferred from homology"/>
<keyword id="KW-0028">Amino-acid biosynthesis</keyword>
<keyword id="KW-0378">Hydrolase</keyword>
<keyword id="KW-0460">Magnesium</keyword>
<keyword id="KW-0479">Metal-binding</keyword>
<keyword id="KW-0486">Methionine biosynthesis</keyword>
<name>MTNC_PSE14</name>
<comment type="function">
    <text evidence="1">Bifunctional enzyme that catalyzes the enolization of 2,3-diketo-5-methylthiopentyl-1-phosphate (DK-MTP-1-P) into the intermediate 2-hydroxy-3-keto-5-methylthiopentenyl-1-phosphate (HK-MTPenyl-1-P), which is then dephosphorylated to form the acireductone 1,2-dihydroxy-3-keto-5-methylthiopentene (DHK-MTPene).</text>
</comment>
<comment type="catalytic activity">
    <reaction evidence="1">
        <text>5-methylsulfanyl-2,3-dioxopentyl phosphate + H2O = 1,2-dihydroxy-5-(methylsulfanyl)pent-1-en-3-one + phosphate</text>
        <dbReference type="Rhea" id="RHEA:21700"/>
        <dbReference type="ChEBI" id="CHEBI:15377"/>
        <dbReference type="ChEBI" id="CHEBI:43474"/>
        <dbReference type="ChEBI" id="CHEBI:49252"/>
        <dbReference type="ChEBI" id="CHEBI:58828"/>
        <dbReference type="EC" id="3.1.3.77"/>
    </reaction>
</comment>
<comment type="cofactor">
    <cofactor evidence="1">
        <name>Mg(2+)</name>
        <dbReference type="ChEBI" id="CHEBI:18420"/>
    </cofactor>
    <text evidence="1">Binds 1 Mg(2+) ion per subunit.</text>
</comment>
<comment type="pathway">
    <text evidence="1">Amino-acid biosynthesis; L-methionine biosynthesis via salvage pathway; L-methionine from S-methyl-5-thio-alpha-D-ribose 1-phosphate: step 3/6.</text>
</comment>
<comment type="pathway">
    <text evidence="1">Amino-acid biosynthesis; L-methionine biosynthesis via salvage pathway; L-methionine from S-methyl-5-thio-alpha-D-ribose 1-phosphate: step 4/6.</text>
</comment>
<comment type="subunit">
    <text evidence="1">Monomer.</text>
</comment>
<comment type="similarity">
    <text evidence="1">Belongs to the HAD-like hydrolase superfamily. MasA/MtnC family.</text>
</comment>
<organism>
    <name type="scientific">Pseudomonas savastanoi pv. phaseolicola (strain 1448A / Race 6)</name>
    <name type="common">Pseudomonas syringae pv. phaseolicola (strain 1448A / Race 6)</name>
    <dbReference type="NCBI Taxonomy" id="264730"/>
    <lineage>
        <taxon>Bacteria</taxon>
        <taxon>Pseudomonadati</taxon>
        <taxon>Pseudomonadota</taxon>
        <taxon>Gammaproteobacteria</taxon>
        <taxon>Pseudomonadales</taxon>
        <taxon>Pseudomonadaceae</taxon>
        <taxon>Pseudomonas</taxon>
    </lineage>
</organism>
<sequence>MPIKAILTDIEGTTSAVSFVFDVLFPFAKKHLPGFVRQNAGQPAVASQLQAVRTEAGEPDADVERVIAILLEWIAEDRKATPLKALQGMVWEQGYNAGQLKGHVYPDAVDALKHWHQQGYRLYVYSSGSIQAQQLIFGCSEAGDLSGLFSGYFDTTSGPKREAQSYRTIAQAIECPAENILFLSDIVEELDAAQAAGMITCGLARDGGVLVGHRYVSSFALIDPASF</sequence>
<dbReference type="EC" id="3.1.3.77" evidence="1"/>
<dbReference type="EMBL" id="CP000058">
    <property type="protein sequence ID" value="AAZ37666.1"/>
    <property type="molecule type" value="Genomic_DNA"/>
</dbReference>
<dbReference type="RefSeq" id="WP_004665833.1">
    <property type="nucleotide sequence ID" value="NC_005773.3"/>
</dbReference>
<dbReference type="SMR" id="Q48KM6"/>
<dbReference type="KEGG" id="psp:PSPPH_1816"/>
<dbReference type="eggNOG" id="COG4229">
    <property type="taxonomic scope" value="Bacteria"/>
</dbReference>
<dbReference type="HOGENOM" id="CLU_023273_0_0_6"/>
<dbReference type="UniPathway" id="UPA00904">
    <property type="reaction ID" value="UER00876"/>
</dbReference>
<dbReference type="UniPathway" id="UPA00904">
    <property type="reaction ID" value="UER00877"/>
</dbReference>
<dbReference type="Proteomes" id="UP000000551">
    <property type="component" value="Chromosome"/>
</dbReference>
<dbReference type="GO" id="GO:0043715">
    <property type="term" value="F:2,3-diketo-5-methylthiopentyl-1-phosphate enolase activity"/>
    <property type="evidence" value="ECO:0007669"/>
    <property type="project" value="UniProtKB-UniRule"/>
</dbReference>
<dbReference type="GO" id="GO:0043716">
    <property type="term" value="F:2-hydroxy-3-keto-5-methylthiopentenyl-1-phosphate phosphatase activity"/>
    <property type="evidence" value="ECO:0007669"/>
    <property type="project" value="UniProtKB-UniRule"/>
</dbReference>
<dbReference type="GO" id="GO:0043874">
    <property type="term" value="F:acireductone synthase activity"/>
    <property type="evidence" value="ECO:0007669"/>
    <property type="project" value="UniProtKB-EC"/>
</dbReference>
<dbReference type="GO" id="GO:0000287">
    <property type="term" value="F:magnesium ion binding"/>
    <property type="evidence" value="ECO:0007669"/>
    <property type="project" value="UniProtKB-UniRule"/>
</dbReference>
<dbReference type="GO" id="GO:0019509">
    <property type="term" value="P:L-methionine salvage from methylthioadenosine"/>
    <property type="evidence" value="ECO:0007669"/>
    <property type="project" value="UniProtKB-UniRule"/>
</dbReference>
<dbReference type="CDD" id="cd01629">
    <property type="entry name" value="HAD_EP"/>
    <property type="match status" value="1"/>
</dbReference>
<dbReference type="FunFam" id="3.40.50.1000:FF:000079">
    <property type="entry name" value="Enolase-phosphatase E1"/>
    <property type="match status" value="1"/>
</dbReference>
<dbReference type="Gene3D" id="1.10.720.60">
    <property type="match status" value="1"/>
</dbReference>
<dbReference type="Gene3D" id="3.40.50.1000">
    <property type="entry name" value="HAD superfamily/HAD-like"/>
    <property type="match status" value="1"/>
</dbReference>
<dbReference type="HAMAP" id="MF_01681">
    <property type="entry name" value="Salvage_MtnC"/>
    <property type="match status" value="1"/>
</dbReference>
<dbReference type="InterPro" id="IPR023943">
    <property type="entry name" value="Enolase-ppase_E1"/>
</dbReference>
<dbReference type="InterPro" id="IPR036412">
    <property type="entry name" value="HAD-like_sf"/>
</dbReference>
<dbReference type="InterPro" id="IPR006439">
    <property type="entry name" value="HAD-SF_hydro_IA"/>
</dbReference>
<dbReference type="InterPro" id="IPR023214">
    <property type="entry name" value="HAD_sf"/>
</dbReference>
<dbReference type="NCBIfam" id="TIGR01691">
    <property type="entry name" value="enolase-ppase"/>
    <property type="match status" value="1"/>
</dbReference>
<dbReference type="NCBIfam" id="TIGR01549">
    <property type="entry name" value="HAD-SF-IA-v1"/>
    <property type="match status" value="1"/>
</dbReference>
<dbReference type="PANTHER" id="PTHR20371">
    <property type="entry name" value="ENOLASE-PHOSPHATASE E1"/>
    <property type="match status" value="1"/>
</dbReference>
<dbReference type="PANTHER" id="PTHR20371:SF1">
    <property type="entry name" value="ENOLASE-PHOSPHATASE E1"/>
    <property type="match status" value="1"/>
</dbReference>
<dbReference type="Pfam" id="PF00702">
    <property type="entry name" value="Hydrolase"/>
    <property type="match status" value="1"/>
</dbReference>
<dbReference type="PRINTS" id="PR00413">
    <property type="entry name" value="HADHALOGNASE"/>
</dbReference>
<dbReference type="SFLD" id="SFLDG01129">
    <property type="entry name" value="C1.5:_HAD__Beta-PGM__Phosphata"/>
    <property type="match status" value="1"/>
</dbReference>
<dbReference type="SFLD" id="SFLDF00044">
    <property type="entry name" value="enolase-phosphatase"/>
    <property type="match status" value="1"/>
</dbReference>
<dbReference type="SUPFAM" id="SSF56784">
    <property type="entry name" value="HAD-like"/>
    <property type="match status" value="1"/>
</dbReference>
<gene>
    <name evidence="1" type="primary">mtnC</name>
    <name type="ordered locus">PSPPH_1816</name>
</gene>
<evidence type="ECO:0000255" key="1">
    <source>
        <dbReference type="HAMAP-Rule" id="MF_01681"/>
    </source>
</evidence>
<reference key="1">
    <citation type="journal article" date="2005" name="J. Bacteriol.">
        <title>Whole-genome sequence analysis of Pseudomonas syringae pv. phaseolicola 1448A reveals divergence among pathovars in genes involved in virulence and transposition.</title>
        <authorList>
            <person name="Joardar V."/>
            <person name="Lindeberg M."/>
            <person name="Jackson R.W."/>
            <person name="Selengut J."/>
            <person name="Dodson R."/>
            <person name="Brinkac L.M."/>
            <person name="Daugherty S.C."/>
            <person name="DeBoy R.T."/>
            <person name="Durkin A.S."/>
            <person name="Gwinn Giglio M."/>
            <person name="Madupu R."/>
            <person name="Nelson W.C."/>
            <person name="Rosovitz M.J."/>
            <person name="Sullivan S.A."/>
            <person name="Crabtree J."/>
            <person name="Creasy T."/>
            <person name="Davidsen T.M."/>
            <person name="Haft D.H."/>
            <person name="Zafar N."/>
            <person name="Zhou L."/>
            <person name="Halpin R."/>
            <person name="Holley T."/>
            <person name="Khouri H.M."/>
            <person name="Feldblyum T.V."/>
            <person name="White O."/>
            <person name="Fraser C.M."/>
            <person name="Chatterjee A.K."/>
            <person name="Cartinhour S."/>
            <person name="Schneider D."/>
            <person name="Mansfield J.W."/>
            <person name="Collmer A."/>
            <person name="Buell R."/>
        </authorList>
    </citation>
    <scope>NUCLEOTIDE SEQUENCE [LARGE SCALE GENOMIC DNA]</scope>
    <source>
        <strain>1448A / Race 6</strain>
    </source>
</reference>
<protein>
    <recommendedName>
        <fullName evidence="1">Enolase-phosphatase E1</fullName>
        <ecNumber evidence="1">3.1.3.77</ecNumber>
    </recommendedName>
    <alternativeName>
        <fullName evidence="1">2,3-diketo-5-methylthio-1-phosphopentane phosphatase</fullName>
    </alternativeName>
</protein>
<feature type="chain" id="PRO_0000357391" description="Enolase-phosphatase E1">
    <location>
        <begin position="1"/>
        <end position="227"/>
    </location>
</feature>
<accession>Q48KM6</accession>